<gene>
    <name evidence="1" type="primary">rppH</name>
    <name evidence="1" type="synonym">nudH</name>
    <name type="ordered locus">NMB1683</name>
</gene>
<reference key="1">
    <citation type="journal article" date="2000" name="Science">
        <title>Complete genome sequence of Neisseria meningitidis serogroup B strain MC58.</title>
        <authorList>
            <person name="Tettelin H."/>
            <person name="Saunders N.J."/>
            <person name="Heidelberg J.F."/>
            <person name="Jeffries A.C."/>
            <person name="Nelson K.E."/>
            <person name="Eisen J.A."/>
            <person name="Ketchum K.A."/>
            <person name="Hood D.W."/>
            <person name="Peden J.F."/>
            <person name="Dodson R.J."/>
            <person name="Nelson W.C."/>
            <person name="Gwinn M.L."/>
            <person name="DeBoy R.T."/>
            <person name="Peterson J.D."/>
            <person name="Hickey E.K."/>
            <person name="Haft D.H."/>
            <person name="Salzberg S.L."/>
            <person name="White O."/>
            <person name="Fleischmann R.D."/>
            <person name="Dougherty B.A."/>
            <person name="Mason T.M."/>
            <person name="Ciecko A."/>
            <person name="Parksey D.S."/>
            <person name="Blair E."/>
            <person name="Cittone H."/>
            <person name="Clark E.B."/>
            <person name="Cotton M.D."/>
            <person name="Utterback T.R."/>
            <person name="Khouri H.M."/>
            <person name="Qin H."/>
            <person name="Vamathevan J.J."/>
            <person name="Gill J."/>
            <person name="Scarlato V."/>
            <person name="Masignani V."/>
            <person name="Pizza M."/>
            <person name="Grandi G."/>
            <person name="Sun L."/>
            <person name="Smith H.O."/>
            <person name="Fraser C.M."/>
            <person name="Moxon E.R."/>
            <person name="Rappuoli R."/>
            <person name="Venter J.C."/>
        </authorList>
    </citation>
    <scope>NUCLEOTIDE SEQUENCE [LARGE SCALE GENOMIC DNA]</scope>
    <source>
        <strain>ATCC BAA-335 / MC58</strain>
    </source>
</reference>
<evidence type="ECO:0000255" key="1">
    <source>
        <dbReference type="HAMAP-Rule" id="MF_00298"/>
    </source>
</evidence>
<organism>
    <name type="scientific">Neisseria meningitidis serogroup B (strain ATCC BAA-335 / MC58)</name>
    <dbReference type="NCBI Taxonomy" id="122586"/>
    <lineage>
        <taxon>Bacteria</taxon>
        <taxon>Pseudomonadati</taxon>
        <taxon>Pseudomonadota</taxon>
        <taxon>Betaproteobacteria</taxon>
        <taxon>Neisseriales</taxon>
        <taxon>Neisseriaceae</taxon>
        <taxon>Neisseria</taxon>
    </lineage>
</organism>
<name>RPPH_NEIMB</name>
<feature type="chain" id="PRO_0000057013" description="RNA pyrophosphohydrolase">
    <location>
        <begin position="1"/>
        <end position="174"/>
    </location>
</feature>
<feature type="domain" description="Nudix hydrolase" evidence="1">
    <location>
        <begin position="6"/>
        <end position="149"/>
    </location>
</feature>
<feature type="short sequence motif" description="Nudix box">
    <location>
        <begin position="38"/>
        <end position="59"/>
    </location>
</feature>
<dbReference type="EC" id="3.6.1.-" evidence="1"/>
<dbReference type="EMBL" id="AE002098">
    <property type="protein sequence ID" value="AAF42031.1"/>
    <property type="molecule type" value="Genomic_DNA"/>
</dbReference>
<dbReference type="PIR" id="E81055">
    <property type="entry name" value="E81055"/>
</dbReference>
<dbReference type="RefSeq" id="NP_274687.1">
    <property type="nucleotide sequence ID" value="NC_003112.2"/>
</dbReference>
<dbReference type="SMR" id="Q9JY96"/>
<dbReference type="FunCoup" id="Q9JY96">
    <property type="interactions" value="237"/>
</dbReference>
<dbReference type="STRING" id="122586.NMB1683"/>
<dbReference type="PaxDb" id="122586-NMB1683"/>
<dbReference type="KEGG" id="nme:NMB1683"/>
<dbReference type="PATRIC" id="fig|122586.8.peg.2165"/>
<dbReference type="HOGENOM" id="CLU_087195_3_1_4"/>
<dbReference type="InParanoid" id="Q9JY96"/>
<dbReference type="OrthoDB" id="9816040at2"/>
<dbReference type="Proteomes" id="UP000000425">
    <property type="component" value="Chromosome"/>
</dbReference>
<dbReference type="GO" id="GO:0005737">
    <property type="term" value="C:cytoplasm"/>
    <property type="evidence" value="ECO:0000318"/>
    <property type="project" value="GO_Central"/>
</dbReference>
<dbReference type="GO" id="GO:0034353">
    <property type="term" value="F:mRNA 5'-diphosphatase activity"/>
    <property type="evidence" value="ECO:0000318"/>
    <property type="project" value="GO_Central"/>
</dbReference>
<dbReference type="GO" id="GO:0006402">
    <property type="term" value="P:mRNA catabolic process"/>
    <property type="evidence" value="ECO:0000318"/>
    <property type="project" value="GO_Central"/>
</dbReference>
<dbReference type="CDD" id="cd03671">
    <property type="entry name" value="NUDIX_Ap4A_hydrolase_plant_like"/>
    <property type="match status" value="1"/>
</dbReference>
<dbReference type="FunFam" id="3.90.79.10:FF:000001">
    <property type="entry name" value="RNA pyrophosphohydrolase"/>
    <property type="match status" value="1"/>
</dbReference>
<dbReference type="Gene3D" id="3.90.79.10">
    <property type="entry name" value="Nucleoside Triphosphate Pyrophosphohydrolase"/>
    <property type="match status" value="1"/>
</dbReference>
<dbReference type="HAMAP" id="MF_00298">
    <property type="entry name" value="Nudix_RppH"/>
    <property type="match status" value="1"/>
</dbReference>
<dbReference type="InterPro" id="IPR020476">
    <property type="entry name" value="Nudix_hydrolase"/>
</dbReference>
<dbReference type="InterPro" id="IPR015797">
    <property type="entry name" value="NUDIX_hydrolase-like_dom_sf"/>
</dbReference>
<dbReference type="InterPro" id="IPR020084">
    <property type="entry name" value="NUDIX_hydrolase_CS"/>
</dbReference>
<dbReference type="InterPro" id="IPR000086">
    <property type="entry name" value="NUDIX_hydrolase_dom"/>
</dbReference>
<dbReference type="InterPro" id="IPR022927">
    <property type="entry name" value="RppH"/>
</dbReference>
<dbReference type="NCBIfam" id="NF001935">
    <property type="entry name" value="PRK00714.1-2"/>
    <property type="match status" value="1"/>
</dbReference>
<dbReference type="NCBIfam" id="NF001937">
    <property type="entry name" value="PRK00714.1-4"/>
    <property type="match status" value="1"/>
</dbReference>
<dbReference type="NCBIfam" id="NF001938">
    <property type="entry name" value="PRK00714.1-5"/>
    <property type="match status" value="1"/>
</dbReference>
<dbReference type="PANTHER" id="PTHR43736">
    <property type="entry name" value="ADP-RIBOSE PYROPHOSPHATASE"/>
    <property type="match status" value="1"/>
</dbReference>
<dbReference type="PANTHER" id="PTHR43736:SF1">
    <property type="entry name" value="DIHYDRONEOPTERIN TRIPHOSPHATE DIPHOSPHATASE"/>
    <property type="match status" value="1"/>
</dbReference>
<dbReference type="Pfam" id="PF00293">
    <property type="entry name" value="NUDIX"/>
    <property type="match status" value="1"/>
</dbReference>
<dbReference type="PRINTS" id="PR00502">
    <property type="entry name" value="NUDIXFAMILY"/>
</dbReference>
<dbReference type="SUPFAM" id="SSF55811">
    <property type="entry name" value="Nudix"/>
    <property type="match status" value="1"/>
</dbReference>
<dbReference type="PROSITE" id="PS51462">
    <property type="entry name" value="NUDIX"/>
    <property type="match status" value="1"/>
</dbReference>
<dbReference type="PROSITE" id="PS00893">
    <property type="entry name" value="NUDIX_BOX"/>
    <property type="match status" value="1"/>
</dbReference>
<comment type="function">
    <text evidence="1">Accelerates the degradation of transcripts by removing pyrophosphate from the 5'-end of triphosphorylated RNA, leading to a more labile monophosphorylated state that can stimulate subsequent ribonuclease cleavage.</text>
</comment>
<comment type="cofactor">
    <cofactor evidence="1">
        <name>a divalent metal cation</name>
        <dbReference type="ChEBI" id="CHEBI:60240"/>
    </cofactor>
</comment>
<comment type="similarity">
    <text evidence="1">Belongs to the Nudix hydrolase family. RppH subfamily.</text>
</comment>
<keyword id="KW-0378">Hydrolase</keyword>
<keyword id="KW-1185">Reference proteome</keyword>
<proteinExistence type="inferred from homology"/>
<sequence length="174" mass="21019">MLDREGYRPNVGIILINNRNEVFWGKRVREHSWQFPQGGIKPGESPETAMYRELYEEVGLLPQHVKIIGRTRDWLRYDVPNNWVRREWRGSYRGQKQIWYLLRLTGRDCDVNLRATRHPEFDGWRWHQYWAPVDEVIDFKRDVYLGALKELSSRFLRGMESYEDFAARQSSDNR</sequence>
<accession>Q9JY96</accession>
<protein>
    <recommendedName>
        <fullName evidence="1">RNA pyrophosphohydrolase</fullName>
        <ecNumber evidence="1">3.6.1.-</ecNumber>
    </recommendedName>
    <alternativeName>
        <fullName evidence="1">(Di)nucleoside polyphosphate hydrolase</fullName>
    </alternativeName>
</protein>